<dbReference type="EMBL" id="AM406670">
    <property type="protein sequence ID" value="CAL94723.1"/>
    <property type="molecule type" value="Genomic_DNA"/>
</dbReference>
<dbReference type="RefSeq" id="WP_011765837.1">
    <property type="nucleotide sequence ID" value="NC_008702.1"/>
</dbReference>
<dbReference type="SMR" id="A1K7B8"/>
<dbReference type="STRING" id="62928.azo2106"/>
<dbReference type="KEGG" id="aoa:dqs_2238"/>
<dbReference type="KEGG" id="azo:azo2106"/>
<dbReference type="eggNOG" id="COG0858">
    <property type="taxonomic scope" value="Bacteria"/>
</dbReference>
<dbReference type="HOGENOM" id="CLU_089475_5_0_4"/>
<dbReference type="OrthoDB" id="307788at2"/>
<dbReference type="Proteomes" id="UP000002588">
    <property type="component" value="Chromosome"/>
</dbReference>
<dbReference type="GO" id="GO:0005829">
    <property type="term" value="C:cytosol"/>
    <property type="evidence" value="ECO:0007669"/>
    <property type="project" value="TreeGrafter"/>
</dbReference>
<dbReference type="GO" id="GO:0043024">
    <property type="term" value="F:ribosomal small subunit binding"/>
    <property type="evidence" value="ECO:0007669"/>
    <property type="project" value="TreeGrafter"/>
</dbReference>
<dbReference type="GO" id="GO:0030490">
    <property type="term" value="P:maturation of SSU-rRNA"/>
    <property type="evidence" value="ECO:0007669"/>
    <property type="project" value="UniProtKB-UniRule"/>
</dbReference>
<dbReference type="Gene3D" id="3.30.300.20">
    <property type="match status" value="1"/>
</dbReference>
<dbReference type="HAMAP" id="MF_00003">
    <property type="entry name" value="RbfA"/>
    <property type="match status" value="1"/>
</dbReference>
<dbReference type="InterPro" id="IPR015946">
    <property type="entry name" value="KH_dom-like_a/b"/>
</dbReference>
<dbReference type="InterPro" id="IPR000238">
    <property type="entry name" value="RbfA"/>
</dbReference>
<dbReference type="InterPro" id="IPR023799">
    <property type="entry name" value="RbfA_dom_sf"/>
</dbReference>
<dbReference type="NCBIfam" id="TIGR00082">
    <property type="entry name" value="rbfA"/>
    <property type="match status" value="1"/>
</dbReference>
<dbReference type="PANTHER" id="PTHR33515">
    <property type="entry name" value="RIBOSOME-BINDING FACTOR A, CHLOROPLASTIC-RELATED"/>
    <property type="match status" value="1"/>
</dbReference>
<dbReference type="PANTHER" id="PTHR33515:SF1">
    <property type="entry name" value="RIBOSOME-BINDING FACTOR A, CHLOROPLASTIC-RELATED"/>
    <property type="match status" value="1"/>
</dbReference>
<dbReference type="Pfam" id="PF02033">
    <property type="entry name" value="RBFA"/>
    <property type="match status" value="1"/>
</dbReference>
<dbReference type="SUPFAM" id="SSF89919">
    <property type="entry name" value="Ribosome-binding factor A, RbfA"/>
    <property type="match status" value="1"/>
</dbReference>
<keyword id="KW-0963">Cytoplasm</keyword>
<keyword id="KW-1185">Reference proteome</keyword>
<keyword id="KW-0690">Ribosome biogenesis</keyword>
<comment type="function">
    <text evidence="1">One of several proteins that assist in the late maturation steps of the functional core of the 30S ribosomal subunit. Associates with free 30S ribosomal subunits (but not with 30S subunits that are part of 70S ribosomes or polysomes). Required for efficient processing of 16S rRNA. May interact with the 5'-terminal helix region of 16S rRNA.</text>
</comment>
<comment type="subunit">
    <text evidence="1">Monomer. Binds 30S ribosomal subunits, but not 50S ribosomal subunits or 70S ribosomes.</text>
</comment>
<comment type="subcellular location">
    <subcellularLocation>
        <location evidence="1">Cytoplasm</location>
    </subcellularLocation>
</comment>
<comment type="similarity">
    <text evidence="1">Belongs to the RbfA family.</text>
</comment>
<name>RBFA_AZOSB</name>
<accession>A1K7B8</accession>
<gene>
    <name evidence="1" type="primary">rbfA</name>
    <name type="ordered locus">azo2106</name>
</gene>
<sequence length="126" mass="14845">MPKEYSRSQRVVEQIRRELAELIRLEVKDPRVGFITLTDVEISPDYAHAKVFFTSMTGEESVPEILQGLRRASGFLRRELGRRVRIHTTPELHFHYDRSVEEGSRLSRLIDDAVREDEIRHRDDDN</sequence>
<evidence type="ECO:0000255" key="1">
    <source>
        <dbReference type="HAMAP-Rule" id="MF_00003"/>
    </source>
</evidence>
<reference key="1">
    <citation type="journal article" date="2006" name="Nat. Biotechnol.">
        <title>Complete genome of the mutualistic, N2-fixing grass endophyte Azoarcus sp. strain BH72.</title>
        <authorList>
            <person name="Krause A."/>
            <person name="Ramakumar A."/>
            <person name="Bartels D."/>
            <person name="Battistoni F."/>
            <person name="Bekel T."/>
            <person name="Boch J."/>
            <person name="Boehm M."/>
            <person name="Friedrich F."/>
            <person name="Hurek T."/>
            <person name="Krause L."/>
            <person name="Linke B."/>
            <person name="McHardy A.C."/>
            <person name="Sarkar A."/>
            <person name="Schneiker S."/>
            <person name="Syed A.A."/>
            <person name="Thauer R."/>
            <person name="Vorhoelter F.-J."/>
            <person name="Weidner S."/>
            <person name="Puehler A."/>
            <person name="Reinhold-Hurek B."/>
            <person name="Kaiser O."/>
            <person name="Goesmann A."/>
        </authorList>
    </citation>
    <scope>NUCLEOTIDE SEQUENCE [LARGE SCALE GENOMIC DNA]</scope>
    <source>
        <strain>BH72</strain>
    </source>
</reference>
<feature type="chain" id="PRO_1000000070" description="Ribosome-binding factor A">
    <location>
        <begin position="1"/>
        <end position="126"/>
    </location>
</feature>
<proteinExistence type="inferred from homology"/>
<protein>
    <recommendedName>
        <fullName evidence="1">Ribosome-binding factor A</fullName>
    </recommendedName>
</protein>
<organism>
    <name type="scientific">Azoarcus sp. (strain BH72)</name>
    <dbReference type="NCBI Taxonomy" id="418699"/>
    <lineage>
        <taxon>Bacteria</taxon>
        <taxon>Pseudomonadati</taxon>
        <taxon>Pseudomonadota</taxon>
        <taxon>Betaproteobacteria</taxon>
        <taxon>Rhodocyclales</taxon>
        <taxon>Zoogloeaceae</taxon>
        <taxon>Azoarcus</taxon>
    </lineage>
</organism>